<accession>F4ILR7</accession>
<accession>Q56WR8</accession>
<accession>Q9SJ58</accession>
<protein>
    <recommendedName>
        <fullName evidence="4">DExH-box ATP-dependent RNA helicase DExH1</fullName>
        <ecNumber evidence="4">3.6.4.13</ecNumber>
    </recommendedName>
</protein>
<keyword id="KW-0067">ATP-binding</keyword>
<keyword id="KW-0347">Helicase</keyword>
<keyword id="KW-0378">Hydrolase</keyword>
<keyword id="KW-0547">Nucleotide-binding</keyword>
<keyword id="KW-1185">Reference proteome</keyword>
<keyword id="KW-0694">RNA-binding</keyword>
<feature type="chain" id="PRO_0000435291" description="DExH-box ATP-dependent RNA helicase DExH1">
    <location>
        <begin position="1"/>
        <end position="995"/>
    </location>
</feature>
<feature type="domain" description="Helicase ATP-binding" evidence="1">
    <location>
        <begin position="238"/>
        <end position="405"/>
    </location>
</feature>
<feature type="domain" description="Helicase C-terminal" evidence="2">
    <location>
        <begin position="484"/>
        <end position="663"/>
    </location>
</feature>
<feature type="region of interest" description="Disordered" evidence="3">
    <location>
        <begin position="1"/>
        <end position="42"/>
    </location>
</feature>
<feature type="region of interest" description="Disordered" evidence="3">
    <location>
        <begin position="156"/>
        <end position="192"/>
    </location>
</feature>
<feature type="region of interest" description="Disordered" evidence="3">
    <location>
        <begin position="429"/>
        <end position="450"/>
    </location>
</feature>
<feature type="short sequence motif" description="DEIH box" evidence="4">
    <location>
        <begin position="352"/>
        <end position="355"/>
    </location>
</feature>
<feature type="compositionally biased region" description="Gly residues" evidence="3">
    <location>
        <begin position="25"/>
        <end position="37"/>
    </location>
</feature>
<feature type="compositionally biased region" description="Low complexity" evidence="3">
    <location>
        <begin position="161"/>
        <end position="170"/>
    </location>
</feature>
<feature type="compositionally biased region" description="Polar residues" evidence="3">
    <location>
        <begin position="171"/>
        <end position="181"/>
    </location>
</feature>
<feature type="binding site" evidence="1">
    <location>
        <begin position="251"/>
        <end position="258"/>
    </location>
    <ligand>
        <name>ATP</name>
        <dbReference type="ChEBI" id="CHEBI:30616"/>
    </ligand>
</feature>
<feature type="sequence conflict" description="In Ref. 4; BAD94478." evidence="4" ref="4">
    <original>E</original>
    <variation>K</variation>
    <location>
        <position position="571"/>
    </location>
</feature>
<sequence length="995" mass="111039">MPPHGPNSQGGRRGGGHSSGRRGGRGGGGRGGGGGGRGEQRWWDPVWRAERLRQQQAEMEVLDENEWWNKIEQWKTGGEQEMLIKRNFSRGDQQTLSDMALQMGLYFHAYNKGKALVVSKVPLPDYRADLDERHGSTQKEIKMSTETERKLGSLLKTTQESGSSGASASAFNDQQDRTSTLGLKRPDSASKLPDSLEKEKFSFALKERQEKLKATESVKALKAFREKLPAFKMKEEFLNSVSQNQVLVVSGETGCGKTTQLPQFILEEEISSLRGADCNIICTQPRRISAISVASRISAERGESIGESVGYQIRLESKRSDQTRLLFCTTGVLLRRLIEDPNLTNVSHLLVDEIHERGMNEDFLLIILRDLLPRRPDLRLILMSATINADMFSTYFGNSPTMHIPGFTFPVAELFLEDVLEKSRYNIKSSDSGNYQGSSRGRRRESESKKDDLTTLFEDIDINSHYKSYSSATRNSLEAWSGAQIDVDLVEATIEHICRLEGGGAILVFLTGWDEISKLLEKINMNNFLGDSSKFLVLPLHGSMPTVNQREIFDRPPPNKRKIVLATNIAESSITIDDVVYVVDCGKAKETSYDALNKVACLLPSWISKASAHQRRGRAGRVQAGVCYRLYPKVIYDAFPQYQLPEIIRTPLQELCLHIKSLQVGSIGSFLAKALQPPDALAVENAIELLKTIGALNDVEELTPLGRHLCTLPVDPNIGKMLLIGAIFQCVNPALTIAAALAYRSPFVLPLNRKEEADEAKRYFAGDSCSDHIALLKAYEGYRDAKRGGNEKDFCWQNFLSPVTLRMMEDMRNQFLDLLSDIGFVDKSKPNAYNQYSYDMEMISAVLCAGLYPNVVQCKRRGKRTAFYTKELGKVDIHPGSVNARVNLFSLPYLVYSEKVKTTSVYIRDSTNISDYALLMFGGNLIPSKTGEGIEMLGGYLHFSASKNILELIQRLRGEVDKLLNKKIEDPSLDITVEGKGVVSAVVELLRSQKH</sequence>
<gene>
    <name evidence="5" type="ordered locus">At2g35920</name>
    <name evidence="6" type="ORF">F11F19.17</name>
</gene>
<evidence type="ECO:0000255" key="1">
    <source>
        <dbReference type="PROSITE-ProRule" id="PRU00541"/>
    </source>
</evidence>
<evidence type="ECO:0000255" key="2">
    <source>
        <dbReference type="PROSITE-ProRule" id="PRU00542"/>
    </source>
</evidence>
<evidence type="ECO:0000256" key="3">
    <source>
        <dbReference type="SAM" id="MobiDB-lite"/>
    </source>
</evidence>
<evidence type="ECO:0000305" key="4"/>
<evidence type="ECO:0000312" key="5">
    <source>
        <dbReference type="Araport" id="AT2G35920"/>
    </source>
</evidence>
<evidence type="ECO:0000312" key="6">
    <source>
        <dbReference type="EMBL" id="AAD21465.1"/>
    </source>
</evidence>
<comment type="catalytic activity">
    <reaction evidence="4">
        <text>ATP + H2O = ADP + phosphate + H(+)</text>
        <dbReference type="Rhea" id="RHEA:13065"/>
        <dbReference type="ChEBI" id="CHEBI:15377"/>
        <dbReference type="ChEBI" id="CHEBI:15378"/>
        <dbReference type="ChEBI" id="CHEBI:30616"/>
        <dbReference type="ChEBI" id="CHEBI:43474"/>
        <dbReference type="ChEBI" id="CHEBI:456216"/>
        <dbReference type="EC" id="3.6.4.13"/>
    </reaction>
</comment>
<comment type="similarity">
    <text evidence="4">Belongs to the DExH box helicase family.</text>
</comment>
<comment type="sequence caution" evidence="4">
    <conflict type="erroneous gene model prediction">
        <sequence resource="EMBL-CDS" id="AAD21465"/>
    </conflict>
</comment>
<comment type="sequence caution" evidence="4">
    <conflict type="frameshift">
        <sequence resource="EMBL" id="AY070430"/>
    </conflict>
</comment>
<reference key="1">
    <citation type="journal article" date="1999" name="Nature">
        <title>Sequence and analysis of chromosome 2 of the plant Arabidopsis thaliana.</title>
        <authorList>
            <person name="Lin X."/>
            <person name="Kaul S."/>
            <person name="Rounsley S.D."/>
            <person name="Shea T.P."/>
            <person name="Benito M.-I."/>
            <person name="Town C.D."/>
            <person name="Fujii C.Y."/>
            <person name="Mason T.M."/>
            <person name="Bowman C.L."/>
            <person name="Barnstead M.E."/>
            <person name="Feldblyum T.V."/>
            <person name="Buell C.R."/>
            <person name="Ketchum K.A."/>
            <person name="Lee J.J."/>
            <person name="Ronning C.M."/>
            <person name="Koo H.L."/>
            <person name="Moffat K.S."/>
            <person name="Cronin L.A."/>
            <person name="Shen M."/>
            <person name="Pai G."/>
            <person name="Van Aken S."/>
            <person name="Umayam L."/>
            <person name="Tallon L.J."/>
            <person name="Gill J.E."/>
            <person name="Adams M.D."/>
            <person name="Carrera A.J."/>
            <person name="Creasy T.H."/>
            <person name="Goodman H.M."/>
            <person name="Somerville C.R."/>
            <person name="Copenhaver G.P."/>
            <person name="Preuss D."/>
            <person name="Nierman W.C."/>
            <person name="White O."/>
            <person name="Eisen J.A."/>
            <person name="Salzberg S.L."/>
            <person name="Fraser C.M."/>
            <person name="Venter J.C."/>
        </authorList>
    </citation>
    <scope>NUCLEOTIDE SEQUENCE [LARGE SCALE GENOMIC DNA]</scope>
    <source>
        <strain>cv. Columbia</strain>
    </source>
</reference>
<reference key="2">
    <citation type="journal article" date="2017" name="Plant J.">
        <title>Araport11: a complete reannotation of the Arabidopsis thaliana reference genome.</title>
        <authorList>
            <person name="Cheng C.Y."/>
            <person name="Krishnakumar V."/>
            <person name="Chan A.P."/>
            <person name="Thibaud-Nissen F."/>
            <person name="Schobel S."/>
            <person name="Town C.D."/>
        </authorList>
    </citation>
    <scope>GENOME REANNOTATION</scope>
    <source>
        <strain>cv. Columbia</strain>
    </source>
</reference>
<reference key="3">
    <citation type="journal article" date="2003" name="Science">
        <title>Empirical analysis of transcriptional activity in the Arabidopsis genome.</title>
        <authorList>
            <person name="Yamada K."/>
            <person name="Lim J."/>
            <person name="Dale J.M."/>
            <person name="Chen H."/>
            <person name="Shinn P."/>
            <person name="Palm C.J."/>
            <person name="Southwick A.M."/>
            <person name="Wu H.C."/>
            <person name="Kim C.J."/>
            <person name="Nguyen M."/>
            <person name="Pham P.K."/>
            <person name="Cheuk R.F."/>
            <person name="Karlin-Newmann G."/>
            <person name="Liu S.X."/>
            <person name="Lam B."/>
            <person name="Sakano H."/>
            <person name="Wu T."/>
            <person name="Yu G."/>
            <person name="Miranda M."/>
            <person name="Quach H.L."/>
            <person name="Tripp M."/>
            <person name="Chang C.H."/>
            <person name="Lee J.M."/>
            <person name="Toriumi M.J."/>
            <person name="Chan M.M."/>
            <person name="Tang C.C."/>
            <person name="Onodera C.S."/>
            <person name="Deng J.M."/>
            <person name="Akiyama K."/>
            <person name="Ansari Y."/>
            <person name="Arakawa T."/>
            <person name="Banh J."/>
            <person name="Banno F."/>
            <person name="Bowser L."/>
            <person name="Brooks S.Y."/>
            <person name="Carninci P."/>
            <person name="Chao Q."/>
            <person name="Choy N."/>
            <person name="Enju A."/>
            <person name="Goldsmith A.D."/>
            <person name="Gurjal M."/>
            <person name="Hansen N.F."/>
            <person name="Hayashizaki Y."/>
            <person name="Johnson-Hopson C."/>
            <person name="Hsuan V.W."/>
            <person name="Iida K."/>
            <person name="Karnes M."/>
            <person name="Khan S."/>
            <person name="Koesema E."/>
            <person name="Ishida J."/>
            <person name="Jiang P.X."/>
            <person name="Jones T."/>
            <person name="Kawai J."/>
            <person name="Kamiya A."/>
            <person name="Meyers C."/>
            <person name="Nakajima M."/>
            <person name="Narusaka M."/>
            <person name="Seki M."/>
            <person name="Sakurai T."/>
            <person name="Satou M."/>
            <person name="Tamse R."/>
            <person name="Vaysberg M."/>
            <person name="Wallender E.K."/>
            <person name="Wong C."/>
            <person name="Yamamura Y."/>
            <person name="Yuan S."/>
            <person name="Shinozaki K."/>
            <person name="Davis R.W."/>
            <person name="Theologis A."/>
            <person name="Ecker J.R."/>
        </authorList>
    </citation>
    <scope>NUCLEOTIDE SEQUENCE [LARGE SCALE MRNA]</scope>
    <source>
        <strain>cv. Columbia</strain>
    </source>
</reference>
<reference key="4">
    <citation type="submission" date="2005-03" db="EMBL/GenBank/DDBJ databases">
        <title>Large-scale analysis of RIKEN Arabidopsis full-length (RAFL) cDNAs.</title>
        <authorList>
            <person name="Totoki Y."/>
            <person name="Seki M."/>
            <person name="Ishida J."/>
            <person name="Nakajima M."/>
            <person name="Enju A."/>
            <person name="Kamiya A."/>
            <person name="Narusaka M."/>
            <person name="Shin-i T."/>
            <person name="Nakagawa M."/>
            <person name="Sakamoto N."/>
            <person name="Oishi K."/>
            <person name="Kohara Y."/>
            <person name="Kobayashi M."/>
            <person name="Toyoda A."/>
            <person name="Sakaki Y."/>
            <person name="Sakurai T."/>
            <person name="Iida K."/>
            <person name="Akiyama K."/>
            <person name="Satou M."/>
            <person name="Toyoda T."/>
            <person name="Konagaya A."/>
            <person name="Carninci P."/>
            <person name="Kawai J."/>
            <person name="Hayashizaki Y."/>
            <person name="Shinozaki K."/>
        </authorList>
    </citation>
    <scope>NUCLEOTIDE SEQUENCE [LARGE SCALE MRNA] OF 415-995</scope>
    <source>
        <strain>cv. Columbia</strain>
    </source>
</reference>
<reference key="5">
    <citation type="journal article" date="2013" name="PLoS ONE">
        <title>Genome-wide comparative in silico analysis of the RNA helicase gene family in Zea mays and Glycine max: a comparison with Arabidopsis and Oryza sativa.</title>
        <authorList>
            <person name="Xu R."/>
            <person name="Zhang S."/>
            <person name="Huang J."/>
            <person name="Zheng C."/>
        </authorList>
    </citation>
    <scope>GENE FAMILY</scope>
</reference>
<proteinExistence type="evidence at transcript level"/>
<organism>
    <name type="scientific">Arabidopsis thaliana</name>
    <name type="common">Mouse-ear cress</name>
    <dbReference type="NCBI Taxonomy" id="3702"/>
    <lineage>
        <taxon>Eukaryota</taxon>
        <taxon>Viridiplantae</taxon>
        <taxon>Streptophyta</taxon>
        <taxon>Embryophyta</taxon>
        <taxon>Tracheophyta</taxon>
        <taxon>Spermatophyta</taxon>
        <taxon>Magnoliopsida</taxon>
        <taxon>eudicotyledons</taxon>
        <taxon>Gunneridae</taxon>
        <taxon>Pentapetalae</taxon>
        <taxon>rosids</taxon>
        <taxon>malvids</taxon>
        <taxon>Brassicales</taxon>
        <taxon>Brassicaceae</taxon>
        <taxon>Camelineae</taxon>
        <taxon>Arabidopsis</taxon>
    </lineage>
</organism>
<dbReference type="EC" id="3.6.4.13" evidence="4"/>
<dbReference type="EMBL" id="AC007017">
    <property type="protein sequence ID" value="AAD21465.1"/>
    <property type="status" value="ALT_SEQ"/>
    <property type="molecule type" value="Genomic_DNA"/>
</dbReference>
<dbReference type="EMBL" id="CP002685">
    <property type="protein sequence ID" value="AEC09177.1"/>
    <property type="molecule type" value="Genomic_DNA"/>
</dbReference>
<dbReference type="EMBL" id="AY070430">
    <property type="status" value="NOT_ANNOTATED_CDS"/>
    <property type="molecule type" value="mRNA"/>
</dbReference>
<dbReference type="EMBL" id="AK221966">
    <property type="protein sequence ID" value="BAD94478.1"/>
    <property type="molecule type" value="mRNA"/>
</dbReference>
<dbReference type="PIR" id="F84774">
    <property type="entry name" value="F84774"/>
</dbReference>
<dbReference type="RefSeq" id="NP_850255.1">
    <property type="nucleotide sequence ID" value="NM_179924.2"/>
</dbReference>
<dbReference type="SMR" id="F4ILR7"/>
<dbReference type="FunCoup" id="F4ILR7">
    <property type="interactions" value="3849"/>
</dbReference>
<dbReference type="STRING" id="3702.F4ILR7"/>
<dbReference type="iPTMnet" id="F4ILR7"/>
<dbReference type="PaxDb" id="3702-AT2G35920.1"/>
<dbReference type="ProteomicsDB" id="224249"/>
<dbReference type="EnsemblPlants" id="AT2G35920.1">
    <property type="protein sequence ID" value="AT2G35920.1"/>
    <property type="gene ID" value="AT2G35920"/>
</dbReference>
<dbReference type="GeneID" id="818165"/>
<dbReference type="Gramene" id="AT2G35920.1">
    <property type="protein sequence ID" value="AT2G35920.1"/>
    <property type="gene ID" value="AT2G35920"/>
</dbReference>
<dbReference type="KEGG" id="ath:AT2G35920"/>
<dbReference type="Araport" id="AT2G35920"/>
<dbReference type="TAIR" id="AT2G35920"/>
<dbReference type="eggNOG" id="KOG0920">
    <property type="taxonomic scope" value="Eukaryota"/>
</dbReference>
<dbReference type="HOGENOM" id="CLU_001832_1_0_1"/>
<dbReference type="InParanoid" id="F4ILR7"/>
<dbReference type="OrthoDB" id="5600252at2759"/>
<dbReference type="PRO" id="PR:F4ILR7"/>
<dbReference type="Proteomes" id="UP000006548">
    <property type="component" value="Chromosome 2"/>
</dbReference>
<dbReference type="ExpressionAtlas" id="F4ILR7">
    <property type="expression patterns" value="baseline and differential"/>
</dbReference>
<dbReference type="GO" id="GO:0005524">
    <property type="term" value="F:ATP binding"/>
    <property type="evidence" value="ECO:0007669"/>
    <property type="project" value="UniProtKB-KW"/>
</dbReference>
<dbReference type="GO" id="GO:0016887">
    <property type="term" value="F:ATP hydrolysis activity"/>
    <property type="evidence" value="ECO:0007669"/>
    <property type="project" value="RHEA"/>
</dbReference>
<dbReference type="GO" id="GO:0003729">
    <property type="term" value="F:mRNA binding"/>
    <property type="evidence" value="ECO:0000314"/>
    <property type="project" value="TAIR"/>
</dbReference>
<dbReference type="GO" id="GO:0003724">
    <property type="term" value="F:RNA helicase activity"/>
    <property type="evidence" value="ECO:0007669"/>
    <property type="project" value="UniProtKB-EC"/>
</dbReference>
<dbReference type="CDD" id="cd17917">
    <property type="entry name" value="DEXHc_RHA-like"/>
    <property type="match status" value="1"/>
</dbReference>
<dbReference type="CDD" id="cd18791">
    <property type="entry name" value="SF2_C_RHA"/>
    <property type="match status" value="1"/>
</dbReference>
<dbReference type="FunFam" id="3.40.50.300:FF:000500">
    <property type="entry name" value="ATP-dependent RNA helicase DHX29"/>
    <property type="match status" value="1"/>
</dbReference>
<dbReference type="FunFam" id="3.40.50.300:FF:000931">
    <property type="entry name" value="DExH-box ATP-dependent RNA helicase DExH1"/>
    <property type="match status" value="1"/>
</dbReference>
<dbReference type="FunFam" id="1.20.120.1080:FF:000002">
    <property type="entry name" value="Putative ATP-dependent RNA helicase DHX36"/>
    <property type="match status" value="1"/>
</dbReference>
<dbReference type="Gene3D" id="1.20.120.1080">
    <property type="match status" value="1"/>
</dbReference>
<dbReference type="Gene3D" id="3.40.50.300">
    <property type="entry name" value="P-loop containing nucleotide triphosphate hydrolases"/>
    <property type="match status" value="2"/>
</dbReference>
<dbReference type="InterPro" id="IPR011709">
    <property type="entry name" value="DEAD-box_helicase_OB_fold"/>
</dbReference>
<dbReference type="InterPro" id="IPR011545">
    <property type="entry name" value="DEAD/DEAH_box_helicase_dom"/>
</dbReference>
<dbReference type="InterPro" id="IPR002464">
    <property type="entry name" value="DNA/RNA_helicase_DEAH_CS"/>
</dbReference>
<dbReference type="InterPro" id="IPR048333">
    <property type="entry name" value="HA2_WH"/>
</dbReference>
<dbReference type="InterPro" id="IPR007502">
    <property type="entry name" value="Helicase-assoc_dom"/>
</dbReference>
<dbReference type="InterPro" id="IPR014001">
    <property type="entry name" value="Helicase_ATP-bd"/>
</dbReference>
<dbReference type="InterPro" id="IPR001650">
    <property type="entry name" value="Helicase_C-like"/>
</dbReference>
<dbReference type="InterPro" id="IPR027417">
    <property type="entry name" value="P-loop_NTPase"/>
</dbReference>
<dbReference type="PANTHER" id="PTHR18934:SF237">
    <property type="entry name" value="ATP-DEPENDENT DNA_RNA HELICASE DHX36"/>
    <property type="match status" value="1"/>
</dbReference>
<dbReference type="PANTHER" id="PTHR18934">
    <property type="entry name" value="ATP-DEPENDENT RNA HELICASE"/>
    <property type="match status" value="1"/>
</dbReference>
<dbReference type="Pfam" id="PF00270">
    <property type="entry name" value="DEAD"/>
    <property type="match status" value="1"/>
</dbReference>
<dbReference type="Pfam" id="PF21010">
    <property type="entry name" value="HA2_C"/>
    <property type="match status" value="1"/>
</dbReference>
<dbReference type="Pfam" id="PF04408">
    <property type="entry name" value="HA2_N"/>
    <property type="match status" value="1"/>
</dbReference>
<dbReference type="Pfam" id="PF00271">
    <property type="entry name" value="Helicase_C"/>
    <property type="match status" value="1"/>
</dbReference>
<dbReference type="Pfam" id="PF07717">
    <property type="entry name" value="OB_NTP_bind"/>
    <property type="match status" value="1"/>
</dbReference>
<dbReference type="SMART" id="SM00487">
    <property type="entry name" value="DEXDc"/>
    <property type="match status" value="1"/>
</dbReference>
<dbReference type="SMART" id="SM00847">
    <property type="entry name" value="HA2"/>
    <property type="match status" value="1"/>
</dbReference>
<dbReference type="SMART" id="SM00490">
    <property type="entry name" value="HELICc"/>
    <property type="match status" value="1"/>
</dbReference>
<dbReference type="SUPFAM" id="SSF52540">
    <property type="entry name" value="P-loop containing nucleoside triphosphate hydrolases"/>
    <property type="match status" value="1"/>
</dbReference>
<dbReference type="PROSITE" id="PS00690">
    <property type="entry name" value="DEAH_ATP_HELICASE"/>
    <property type="match status" value="1"/>
</dbReference>
<dbReference type="PROSITE" id="PS51192">
    <property type="entry name" value="HELICASE_ATP_BIND_1"/>
    <property type="match status" value="1"/>
</dbReference>
<dbReference type="PROSITE" id="PS51194">
    <property type="entry name" value="HELICASE_CTER"/>
    <property type="match status" value="1"/>
</dbReference>
<name>DEXH1_ARATH</name>